<gene>
    <name evidence="1" type="primary">cgoX</name>
    <name type="synonym">hemY</name>
    <name type="ordered locus">MT2751</name>
</gene>
<protein>
    <recommendedName>
        <fullName evidence="1">Coproporphyrinogen III oxidase</fullName>
        <ecNumber evidence="1">1.3.3.15</ecNumber>
    </recommendedName>
</protein>
<comment type="function">
    <text evidence="1">Involved in coproporphyrin-dependent heme b biosynthesis. Catalyzes the oxidation of coproporphyrinogen III to coproporphyrin III.</text>
</comment>
<comment type="catalytic activity">
    <reaction evidence="1">
        <text>coproporphyrinogen III + 3 O2 = coproporphyrin III + 3 H2O2</text>
        <dbReference type="Rhea" id="RHEA:43436"/>
        <dbReference type="ChEBI" id="CHEBI:15379"/>
        <dbReference type="ChEBI" id="CHEBI:16240"/>
        <dbReference type="ChEBI" id="CHEBI:57309"/>
        <dbReference type="ChEBI" id="CHEBI:131725"/>
        <dbReference type="EC" id="1.3.3.15"/>
    </reaction>
    <physiologicalReaction direction="left-to-right" evidence="1">
        <dbReference type="Rhea" id="RHEA:43437"/>
    </physiologicalReaction>
</comment>
<comment type="cofactor">
    <cofactor evidence="1">
        <name>FAD</name>
        <dbReference type="ChEBI" id="CHEBI:57692"/>
    </cofactor>
    <text evidence="1">Binds 1 FAD per subunit.</text>
</comment>
<comment type="pathway">
    <text evidence="1">Porphyrin-containing compound metabolism; protoheme biosynthesis.</text>
</comment>
<comment type="subcellular location">
    <subcellularLocation>
        <location evidence="1">Cytoplasm</location>
    </subcellularLocation>
</comment>
<comment type="similarity">
    <text evidence="3">Belongs to the protoporphyrinogen/coproporphyrinogen oxidase family. Coproporphyrinogen III oxidase subfamily.</text>
</comment>
<keyword id="KW-0963">Cytoplasm</keyword>
<keyword id="KW-0274">FAD</keyword>
<keyword id="KW-0285">Flavoprotein</keyword>
<keyword id="KW-0350">Heme biosynthesis</keyword>
<keyword id="KW-0560">Oxidoreductase</keyword>
<keyword id="KW-1185">Reference proteome</keyword>
<feature type="chain" id="PRO_0000427270" description="Coproporphyrinogen III oxidase">
    <location>
        <begin position="1"/>
        <end position="452"/>
    </location>
</feature>
<feature type="binding site" evidence="1">
    <location>
        <begin position="10"/>
        <end position="15"/>
    </location>
    <ligand>
        <name>FAD</name>
        <dbReference type="ChEBI" id="CHEBI:57692"/>
    </ligand>
</feature>
<feature type="binding site" evidence="1">
    <location>
        <begin position="36"/>
        <end position="37"/>
    </location>
    <ligand>
        <name>FAD</name>
        <dbReference type="ChEBI" id="CHEBI:57692"/>
    </ligand>
</feature>
<feature type="binding site" evidence="1">
    <location>
        <begin position="58"/>
        <end position="61"/>
    </location>
    <ligand>
        <name>FAD</name>
        <dbReference type="ChEBI" id="CHEBI:57692"/>
    </ligand>
</feature>
<feature type="binding site" evidence="2">
    <location>
        <position position="242"/>
    </location>
    <ligand>
        <name>FAD</name>
        <dbReference type="ChEBI" id="CHEBI:57692"/>
    </ligand>
</feature>
<feature type="binding site" evidence="1">
    <location>
        <position position="390"/>
    </location>
    <ligand>
        <name>FAD</name>
        <dbReference type="ChEBI" id="CHEBI:57692"/>
    </ligand>
</feature>
<feature type="binding site" evidence="1">
    <location>
        <begin position="426"/>
        <end position="428"/>
    </location>
    <ligand>
        <name>FAD</name>
        <dbReference type="ChEBI" id="CHEBI:57692"/>
    </ligand>
</feature>
<organism>
    <name type="scientific">Mycobacterium tuberculosis (strain CDC 1551 / Oshkosh)</name>
    <dbReference type="NCBI Taxonomy" id="83331"/>
    <lineage>
        <taxon>Bacteria</taxon>
        <taxon>Bacillati</taxon>
        <taxon>Actinomycetota</taxon>
        <taxon>Actinomycetes</taxon>
        <taxon>Mycobacteriales</taxon>
        <taxon>Mycobacteriaceae</taxon>
        <taxon>Mycobacterium</taxon>
        <taxon>Mycobacterium tuberculosis complex</taxon>
    </lineage>
</organism>
<accession>P9WMP0</accession>
<accession>L0TAB5</accession>
<accession>O53230</accession>
<accession>P0A5A7</accession>
<reference key="1">
    <citation type="journal article" date="2002" name="J. Bacteriol.">
        <title>Whole-genome comparison of Mycobacterium tuberculosis clinical and laboratory strains.</title>
        <authorList>
            <person name="Fleischmann R.D."/>
            <person name="Alland D."/>
            <person name="Eisen J.A."/>
            <person name="Carpenter L."/>
            <person name="White O."/>
            <person name="Peterson J.D."/>
            <person name="DeBoy R.T."/>
            <person name="Dodson R.J."/>
            <person name="Gwinn M.L."/>
            <person name="Haft D.H."/>
            <person name="Hickey E.K."/>
            <person name="Kolonay J.F."/>
            <person name="Nelson W.C."/>
            <person name="Umayam L.A."/>
            <person name="Ermolaeva M.D."/>
            <person name="Salzberg S.L."/>
            <person name="Delcher A."/>
            <person name="Utterback T.R."/>
            <person name="Weidman J.F."/>
            <person name="Khouri H.M."/>
            <person name="Gill J."/>
            <person name="Mikula A."/>
            <person name="Bishai W."/>
            <person name="Jacobs W.R. Jr."/>
            <person name="Venter J.C."/>
            <person name="Fraser C.M."/>
        </authorList>
    </citation>
    <scope>NUCLEOTIDE SEQUENCE [LARGE SCALE GENOMIC DNA]</scope>
    <source>
        <strain>CDC 1551 / Oshkosh</strain>
    </source>
</reference>
<dbReference type="EC" id="1.3.3.15" evidence="1"/>
<dbReference type="EMBL" id="AE000516">
    <property type="protein sequence ID" value="AAK47066.1"/>
    <property type="molecule type" value="Genomic_DNA"/>
</dbReference>
<dbReference type="RefSeq" id="WP_003413871.1">
    <property type="nucleotide sequence ID" value="NZ_KK341227.1"/>
</dbReference>
<dbReference type="SMR" id="P9WMP0"/>
<dbReference type="KEGG" id="mtc:MT2751"/>
<dbReference type="PATRIC" id="fig|83331.31.peg.2962"/>
<dbReference type="HOGENOM" id="CLU_009629_3_1_11"/>
<dbReference type="UniPathway" id="UPA00252"/>
<dbReference type="Proteomes" id="UP000001020">
    <property type="component" value="Chromosome"/>
</dbReference>
<dbReference type="GO" id="GO:0005737">
    <property type="term" value="C:cytoplasm"/>
    <property type="evidence" value="ECO:0007669"/>
    <property type="project" value="UniProtKB-SubCell"/>
</dbReference>
<dbReference type="GO" id="GO:0004729">
    <property type="term" value="F:oxygen-dependent protoporphyrinogen oxidase activity"/>
    <property type="evidence" value="ECO:0007669"/>
    <property type="project" value="InterPro"/>
</dbReference>
<dbReference type="GO" id="GO:0006783">
    <property type="term" value="P:heme biosynthetic process"/>
    <property type="evidence" value="ECO:0007669"/>
    <property type="project" value="UniProtKB-KW"/>
</dbReference>
<dbReference type="Gene3D" id="3.50.50.60">
    <property type="entry name" value="FAD/NAD(P)-binding domain"/>
    <property type="match status" value="1"/>
</dbReference>
<dbReference type="Gene3D" id="1.10.3110.10">
    <property type="entry name" value="protoporphyrinogen ix oxidase, domain 3"/>
    <property type="match status" value="1"/>
</dbReference>
<dbReference type="Gene3D" id="3.90.660.20">
    <property type="entry name" value="Protoporphyrinogen oxidase, mitochondrial, domain 2"/>
    <property type="match status" value="1"/>
</dbReference>
<dbReference type="InterPro" id="IPR002937">
    <property type="entry name" value="Amino_oxidase"/>
</dbReference>
<dbReference type="InterPro" id="IPR036188">
    <property type="entry name" value="FAD/NAD-bd_sf"/>
</dbReference>
<dbReference type="InterPro" id="IPR004572">
    <property type="entry name" value="Protoporphyrinogen_oxidase"/>
</dbReference>
<dbReference type="InterPro" id="IPR050464">
    <property type="entry name" value="Zeta_carotene_desat/Oxidored"/>
</dbReference>
<dbReference type="NCBIfam" id="NF008841">
    <property type="entry name" value="PRK11883.1-1"/>
    <property type="match status" value="1"/>
</dbReference>
<dbReference type="NCBIfam" id="TIGR00562">
    <property type="entry name" value="proto_IX_ox"/>
    <property type="match status" value="1"/>
</dbReference>
<dbReference type="PANTHER" id="PTHR42923">
    <property type="entry name" value="PROTOPORPHYRINOGEN OXIDASE"/>
    <property type="match status" value="1"/>
</dbReference>
<dbReference type="PANTHER" id="PTHR42923:SF3">
    <property type="entry name" value="PROTOPORPHYRINOGEN OXIDASE"/>
    <property type="match status" value="1"/>
</dbReference>
<dbReference type="Pfam" id="PF01593">
    <property type="entry name" value="Amino_oxidase"/>
    <property type="match status" value="1"/>
</dbReference>
<dbReference type="SUPFAM" id="SSF54373">
    <property type="entry name" value="FAD-linked reductases, C-terminal domain"/>
    <property type="match status" value="1"/>
</dbReference>
<dbReference type="SUPFAM" id="SSF51905">
    <property type="entry name" value="FAD/NAD(P)-binding domain"/>
    <property type="match status" value="1"/>
</dbReference>
<proteinExistence type="inferred from homology"/>
<evidence type="ECO:0000250" key="1">
    <source>
        <dbReference type="UniProtKB" id="P32397"/>
    </source>
</evidence>
<evidence type="ECO:0000250" key="2">
    <source>
        <dbReference type="UniProtKB" id="P56601"/>
    </source>
</evidence>
<evidence type="ECO:0000305" key="3"/>
<name>CGOX_MYCTO</name>
<sequence>MTPRSYCVVGGGISGLTSAYRLRQAVGDDATITLFEPADRLGGVLRTEHIGGQPMDLGAEAFVLRRPEMPALLAELGLSDRQLASTGARPLIYSQQRLHPLPPQTVVGIPSSAGSMAGLVDDATLARIDAEAARPFTWQVGSDPAVADLVADRFGDQVVARSVDPLLSGVYAGSAATIGLRAAAPSVAAALDRGATSVTDAVRQALPPGSGGPVFGALDGGYQVLLDGLVRRSRVHWVRARVVQLERGWVLRDETGGRWQADAVILAVPAPRLARLVDGIAPRTHAAARQIVSASSAVVALAVPGGTAFPHCSGVLVAGDESPHAKAITLSSRKWGQRGDVALLRLSFGRFGDEPALTASDDQLLAWAADDLVTVFGVAVDPVDVRVRRWIEAMPQYGPGHADVVAELRAGLPPTLAVAGSYLDGIGVPACVGAAGRAVTSVIEALDAQVAR</sequence>